<evidence type="ECO:0000250" key="1">
    <source>
        <dbReference type="UniProtKB" id="P9WKD7"/>
    </source>
</evidence>
<evidence type="ECO:0000305" key="2"/>
<proteinExistence type="inferred from homology"/>
<name>RPIB_MYCBO</name>
<gene>
    <name evidence="1" type="primary">rpiB</name>
    <name type="ordered locus">BQ2027_MB2492C</name>
</gene>
<sequence length="162" mass="17278">MSGMRVYLGADHAGYELKQRIIEHLKQTGHEPIDCGALRYDADDDYPAFCIAAATRTVADPGSLGIVLGGSGNGEQIAANKVPGARCALAWSVQTAALAREHNNAQLIGIGGRMHTVAEALAIVDAFVTTPWSKAQRHQRRIDILAEYERTHEAPPVPGAPA</sequence>
<organism>
    <name type="scientific">Mycobacterium bovis (strain ATCC BAA-935 / AF2122/97)</name>
    <dbReference type="NCBI Taxonomy" id="233413"/>
    <lineage>
        <taxon>Bacteria</taxon>
        <taxon>Bacillati</taxon>
        <taxon>Actinomycetota</taxon>
        <taxon>Actinomycetes</taxon>
        <taxon>Mycobacteriales</taxon>
        <taxon>Mycobacteriaceae</taxon>
        <taxon>Mycobacterium</taxon>
        <taxon>Mycobacterium tuberculosis complex</taxon>
    </lineage>
</organism>
<feature type="chain" id="PRO_0000251146" description="Ribose-5-phosphate isomerase B">
    <location>
        <begin position="1"/>
        <end position="162"/>
    </location>
</feature>
<feature type="active site" description="Proton acceptor" evidence="1">
    <location>
        <position position="75"/>
    </location>
</feature>
<feature type="active site" description="Proton donor" evidence="1">
    <location>
        <position position="102"/>
    </location>
</feature>
<feature type="binding site" evidence="1">
    <location>
        <begin position="11"/>
        <end position="12"/>
    </location>
    <ligand>
        <name>D-ribulose 5-phosphate</name>
        <dbReference type="ChEBI" id="CHEBI:58121"/>
    </ligand>
</feature>
<feature type="binding site" evidence="1">
    <location>
        <begin position="70"/>
        <end position="74"/>
    </location>
    <ligand>
        <name>D-ribulose 5-phosphate</name>
        <dbReference type="ChEBI" id="CHEBI:58121"/>
    </ligand>
</feature>
<feature type="binding site" evidence="1">
    <location>
        <position position="103"/>
    </location>
    <ligand>
        <name>D-ribulose 5-phosphate</name>
        <dbReference type="ChEBI" id="CHEBI:58121"/>
    </ligand>
</feature>
<feature type="binding site" evidence="1">
    <location>
        <position position="113"/>
    </location>
    <ligand>
        <name>D-ribulose 5-phosphate</name>
        <dbReference type="ChEBI" id="CHEBI:58121"/>
    </ligand>
</feature>
<feature type="binding site" evidence="1">
    <location>
        <position position="137"/>
    </location>
    <ligand>
        <name>D-ribulose 5-phosphate</name>
        <dbReference type="ChEBI" id="CHEBI:58121"/>
    </ligand>
</feature>
<feature type="binding site" evidence="1">
    <location>
        <position position="141"/>
    </location>
    <ligand>
        <name>D-ribulose 5-phosphate</name>
        <dbReference type="ChEBI" id="CHEBI:58121"/>
    </ligand>
</feature>
<protein>
    <recommendedName>
        <fullName evidence="1">Ribose-5-phosphate isomerase B</fullName>
        <ecNumber evidence="1">5.3.1.6</ecNumber>
    </recommendedName>
    <alternativeName>
        <fullName evidence="1">Phosphoriboisomerase B</fullName>
    </alternativeName>
</protein>
<dbReference type="EC" id="5.3.1.6" evidence="1"/>
<dbReference type="EMBL" id="LT708304">
    <property type="protein sequence ID" value="SIU01107.1"/>
    <property type="molecule type" value="Genomic_DNA"/>
</dbReference>
<dbReference type="RefSeq" id="NP_856139.1">
    <property type="nucleotide sequence ID" value="NC_002945.3"/>
</dbReference>
<dbReference type="SMR" id="Q7TYI9"/>
<dbReference type="KEGG" id="mbo:BQ2027_MB2492C"/>
<dbReference type="PATRIC" id="fig|233413.5.peg.2743"/>
<dbReference type="UniPathway" id="UPA00115">
    <property type="reaction ID" value="UER00412"/>
</dbReference>
<dbReference type="Proteomes" id="UP000001419">
    <property type="component" value="Chromosome"/>
</dbReference>
<dbReference type="GO" id="GO:0004751">
    <property type="term" value="F:ribose-5-phosphate isomerase activity"/>
    <property type="evidence" value="ECO:0000250"/>
    <property type="project" value="UniProtKB"/>
</dbReference>
<dbReference type="GO" id="GO:0019316">
    <property type="term" value="P:D-allose catabolic process"/>
    <property type="evidence" value="ECO:0007669"/>
    <property type="project" value="TreeGrafter"/>
</dbReference>
<dbReference type="GO" id="GO:0009052">
    <property type="term" value="P:pentose-phosphate shunt, non-oxidative branch"/>
    <property type="evidence" value="ECO:0000250"/>
    <property type="project" value="UniProtKB"/>
</dbReference>
<dbReference type="FunFam" id="3.40.1400.10:FF:000002">
    <property type="entry name" value="Ribose-5-phosphate isomerase B"/>
    <property type="match status" value="1"/>
</dbReference>
<dbReference type="Gene3D" id="3.40.1400.10">
    <property type="entry name" value="Sugar-phosphate isomerase, RpiB/LacA/LacB"/>
    <property type="match status" value="1"/>
</dbReference>
<dbReference type="InterPro" id="IPR011860">
    <property type="entry name" value="Rib-5-P_Isoase_Actino"/>
</dbReference>
<dbReference type="InterPro" id="IPR003500">
    <property type="entry name" value="RpiB_LacA_LacB"/>
</dbReference>
<dbReference type="InterPro" id="IPR036569">
    <property type="entry name" value="RpiB_LacA_LacB_sf"/>
</dbReference>
<dbReference type="NCBIfam" id="NF004051">
    <property type="entry name" value="PRK05571.1"/>
    <property type="match status" value="1"/>
</dbReference>
<dbReference type="NCBIfam" id="TIGR02133">
    <property type="entry name" value="RPI_actino"/>
    <property type="match status" value="1"/>
</dbReference>
<dbReference type="NCBIfam" id="TIGR00689">
    <property type="entry name" value="rpiB_lacA_lacB"/>
    <property type="match status" value="1"/>
</dbReference>
<dbReference type="PANTHER" id="PTHR30345:SF0">
    <property type="entry name" value="DNA DAMAGE-REPAIR_TOLERATION PROTEIN DRT102"/>
    <property type="match status" value="1"/>
</dbReference>
<dbReference type="PANTHER" id="PTHR30345">
    <property type="entry name" value="RIBOSE-5-PHOSPHATE ISOMERASE B"/>
    <property type="match status" value="1"/>
</dbReference>
<dbReference type="Pfam" id="PF02502">
    <property type="entry name" value="LacAB_rpiB"/>
    <property type="match status" value="1"/>
</dbReference>
<dbReference type="PIRSF" id="PIRSF005384">
    <property type="entry name" value="RpiB_LacA_B"/>
    <property type="match status" value="1"/>
</dbReference>
<dbReference type="SUPFAM" id="SSF89623">
    <property type="entry name" value="Ribose/Galactose isomerase RpiB/AlsB"/>
    <property type="match status" value="1"/>
</dbReference>
<comment type="function">
    <text evidence="1">Catalyzes the interconversion of ribulose-5-P and ribose-5-P.</text>
</comment>
<comment type="catalytic activity">
    <reaction evidence="1">
        <text>aldehydo-D-ribose 5-phosphate = D-ribulose 5-phosphate</text>
        <dbReference type="Rhea" id="RHEA:14657"/>
        <dbReference type="ChEBI" id="CHEBI:58121"/>
        <dbReference type="ChEBI" id="CHEBI:58273"/>
        <dbReference type="EC" id="5.3.1.6"/>
    </reaction>
</comment>
<comment type="pathway">
    <text evidence="1">Carbohydrate degradation; pentose phosphate pathway; D-ribose 5-phosphate from D-ribulose 5-phosphate (non-oxidative stage): step 1/1.</text>
</comment>
<comment type="subunit">
    <text evidence="1">Homodimer.</text>
</comment>
<comment type="miscellaneous">
    <text evidence="1">In mycobacterial enzymes, the usual proton acceptor is not a cysteine, but is remplaced by a glutamate.</text>
</comment>
<comment type="similarity">
    <text evidence="2">Belongs to the LacAB/RpiB family.</text>
</comment>
<reference key="1">
    <citation type="journal article" date="2003" name="Proc. Natl. Acad. Sci. U.S.A.">
        <title>The complete genome sequence of Mycobacterium bovis.</title>
        <authorList>
            <person name="Garnier T."/>
            <person name="Eiglmeier K."/>
            <person name="Camus J.-C."/>
            <person name="Medina N."/>
            <person name="Mansoor H."/>
            <person name="Pryor M."/>
            <person name="Duthoy S."/>
            <person name="Grondin S."/>
            <person name="Lacroix C."/>
            <person name="Monsempe C."/>
            <person name="Simon S."/>
            <person name="Harris B."/>
            <person name="Atkin R."/>
            <person name="Doggett J."/>
            <person name="Mayes R."/>
            <person name="Keating L."/>
            <person name="Wheeler P.R."/>
            <person name="Parkhill J."/>
            <person name="Barrell B.G."/>
            <person name="Cole S.T."/>
            <person name="Gordon S.V."/>
            <person name="Hewinson R.G."/>
        </authorList>
    </citation>
    <scope>NUCLEOTIDE SEQUENCE [LARGE SCALE GENOMIC DNA]</scope>
    <source>
        <strain>ATCC BAA-935 / AF2122/97</strain>
    </source>
</reference>
<reference key="2">
    <citation type="journal article" date="2017" name="Genome Announc.">
        <title>Updated reference genome sequence and annotation of Mycobacterium bovis AF2122/97.</title>
        <authorList>
            <person name="Malone K.M."/>
            <person name="Farrell D."/>
            <person name="Stuber T.P."/>
            <person name="Schubert O.T."/>
            <person name="Aebersold R."/>
            <person name="Robbe-Austerman S."/>
            <person name="Gordon S.V."/>
        </authorList>
    </citation>
    <scope>NUCLEOTIDE SEQUENCE [LARGE SCALE GENOMIC DNA]</scope>
    <scope>GENOME REANNOTATION</scope>
    <source>
        <strain>ATCC BAA-935 / AF2122/97</strain>
    </source>
</reference>
<accession>Q7TYI9</accession>
<accession>A0A1R3Y1N4</accession>
<accession>X2BL66</accession>
<keyword id="KW-0119">Carbohydrate metabolism</keyword>
<keyword id="KW-0413">Isomerase</keyword>
<keyword id="KW-1185">Reference proteome</keyword>